<sequence length="110" mass="12637">MSNDENRSGSPTGPNTSVITKVKPKTKRPNLYRVLILNDDYTPMEFVVHVLEKFFQKDVEAATKIMLHVHHHGIGECGVFTYEIAETKVTQVMDFARKHQHPLQCVMEKK</sequence>
<dbReference type="EMBL" id="BA000040">
    <property type="protein sequence ID" value="BAC50419.1"/>
    <property type="status" value="ALT_INIT"/>
    <property type="molecule type" value="Genomic_DNA"/>
</dbReference>
<dbReference type="RefSeq" id="NP_771794.1">
    <property type="nucleotide sequence ID" value="NC_004463.1"/>
</dbReference>
<dbReference type="SMR" id="Q89JW5"/>
<dbReference type="FunCoup" id="Q89JW5">
    <property type="interactions" value="236"/>
</dbReference>
<dbReference type="STRING" id="224911.AAV28_23140"/>
<dbReference type="EnsemblBacteria" id="BAC50419">
    <property type="protein sequence ID" value="BAC50419"/>
    <property type="gene ID" value="BAC50419"/>
</dbReference>
<dbReference type="KEGG" id="bja:bll5154"/>
<dbReference type="PATRIC" id="fig|224911.44.peg.5030"/>
<dbReference type="eggNOG" id="COG2127">
    <property type="taxonomic scope" value="Bacteria"/>
</dbReference>
<dbReference type="HOGENOM" id="CLU_134358_0_0_5"/>
<dbReference type="InParanoid" id="Q89JW5"/>
<dbReference type="OrthoDB" id="9796121at2"/>
<dbReference type="Proteomes" id="UP000002526">
    <property type="component" value="Chromosome"/>
</dbReference>
<dbReference type="GO" id="GO:0030163">
    <property type="term" value="P:protein catabolic process"/>
    <property type="evidence" value="ECO:0007669"/>
    <property type="project" value="InterPro"/>
</dbReference>
<dbReference type="GO" id="GO:0006508">
    <property type="term" value="P:proteolysis"/>
    <property type="evidence" value="ECO:0007669"/>
    <property type="project" value="UniProtKB-UniRule"/>
</dbReference>
<dbReference type="FunFam" id="3.30.1390.10:FF:000002">
    <property type="entry name" value="ATP-dependent Clp protease adapter protein ClpS"/>
    <property type="match status" value="1"/>
</dbReference>
<dbReference type="Gene3D" id="3.30.1390.10">
    <property type="match status" value="1"/>
</dbReference>
<dbReference type="HAMAP" id="MF_00302">
    <property type="entry name" value="ClpS"/>
    <property type="match status" value="1"/>
</dbReference>
<dbReference type="InterPro" id="IPR022935">
    <property type="entry name" value="ClpS"/>
</dbReference>
<dbReference type="InterPro" id="IPR003769">
    <property type="entry name" value="ClpS_core"/>
</dbReference>
<dbReference type="InterPro" id="IPR014719">
    <property type="entry name" value="Ribosomal_bL12_C/ClpS-like"/>
</dbReference>
<dbReference type="NCBIfam" id="NF000669">
    <property type="entry name" value="PRK00033.1-2"/>
    <property type="match status" value="1"/>
</dbReference>
<dbReference type="NCBIfam" id="NF000672">
    <property type="entry name" value="PRK00033.1-5"/>
    <property type="match status" value="1"/>
</dbReference>
<dbReference type="PANTHER" id="PTHR33473:SF19">
    <property type="entry name" value="ATP-DEPENDENT CLP PROTEASE ADAPTER PROTEIN CLPS"/>
    <property type="match status" value="1"/>
</dbReference>
<dbReference type="PANTHER" id="PTHR33473">
    <property type="entry name" value="ATP-DEPENDENT CLP PROTEASE ADAPTER PROTEIN CLPS1, CHLOROPLASTIC"/>
    <property type="match status" value="1"/>
</dbReference>
<dbReference type="Pfam" id="PF02617">
    <property type="entry name" value="ClpS"/>
    <property type="match status" value="1"/>
</dbReference>
<dbReference type="SUPFAM" id="SSF54736">
    <property type="entry name" value="ClpS-like"/>
    <property type="match status" value="1"/>
</dbReference>
<evidence type="ECO:0000255" key="1">
    <source>
        <dbReference type="HAMAP-Rule" id="MF_00302"/>
    </source>
</evidence>
<evidence type="ECO:0000256" key="2">
    <source>
        <dbReference type="SAM" id="MobiDB-lite"/>
    </source>
</evidence>
<evidence type="ECO:0000305" key="3"/>
<organism>
    <name type="scientific">Bradyrhizobium diazoefficiens (strain JCM 10833 / BCRC 13528 / IAM 13628 / NBRC 14792 / USDA 110)</name>
    <dbReference type="NCBI Taxonomy" id="224911"/>
    <lineage>
        <taxon>Bacteria</taxon>
        <taxon>Pseudomonadati</taxon>
        <taxon>Pseudomonadota</taxon>
        <taxon>Alphaproteobacteria</taxon>
        <taxon>Hyphomicrobiales</taxon>
        <taxon>Nitrobacteraceae</taxon>
        <taxon>Bradyrhizobium</taxon>
    </lineage>
</organism>
<feature type="chain" id="PRO_0000215690" description="ATP-dependent Clp protease adapter protein ClpS 2">
    <location>
        <begin position="1"/>
        <end position="110"/>
    </location>
</feature>
<feature type="region of interest" description="Disordered" evidence="2">
    <location>
        <begin position="1"/>
        <end position="24"/>
    </location>
</feature>
<feature type="compositionally biased region" description="Polar residues" evidence="2">
    <location>
        <begin position="8"/>
        <end position="19"/>
    </location>
</feature>
<proteinExistence type="inferred from homology"/>
<accession>Q89JW5</accession>
<gene>
    <name evidence="1" type="primary">clpS2</name>
    <name type="ordered locus">bll5154</name>
</gene>
<protein>
    <recommendedName>
        <fullName evidence="1">ATP-dependent Clp protease adapter protein ClpS 2</fullName>
    </recommendedName>
</protein>
<keyword id="KW-1185">Reference proteome</keyword>
<comment type="function">
    <text evidence="1">Involved in the modulation of the specificity of the ClpAP-mediated ATP-dependent protein degradation.</text>
</comment>
<comment type="subunit">
    <text evidence="1">Binds to the N-terminal domain of the chaperone ClpA.</text>
</comment>
<comment type="similarity">
    <text evidence="1">Belongs to the ClpS family.</text>
</comment>
<comment type="sequence caution" evidence="3">
    <conflict type="erroneous initiation">
        <sequence resource="EMBL-CDS" id="BAC50419"/>
    </conflict>
</comment>
<reference key="1">
    <citation type="journal article" date="2002" name="DNA Res.">
        <title>Complete genomic sequence of nitrogen-fixing symbiotic bacterium Bradyrhizobium japonicum USDA110.</title>
        <authorList>
            <person name="Kaneko T."/>
            <person name="Nakamura Y."/>
            <person name="Sato S."/>
            <person name="Minamisawa K."/>
            <person name="Uchiumi T."/>
            <person name="Sasamoto S."/>
            <person name="Watanabe A."/>
            <person name="Idesawa K."/>
            <person name="Iriguchi M."/>
            <person name="Kawashima K."/>
            <person name="Kohara M."/>
            <person name="Matsumoto M."/>
            <person name="Shimpo S."/>
            <person name="Tsuruoka H."/>
            <person name="Wada T."/>
            <person name="Yamada M."/>
            <person name="Tabata S."/>
        </authorList>
    </citation>
    <scope>NUCLEOTIDE SEQUENCE [LARGE SCALE GENOMIC DNA]</scope>
    <source>
        <strain>JCM 10833 / BCRC 13528 / IAM 13628 / NBRC 14792 / USDA 110</strain>
    </source>
</reference>
<name>CLPS2_BRADU</name>